<keyword id="KW-0378">Hydrolase</keyword>
<keyword id="KW-0408">Iron</keyword>
<keyword id="KW-0479">Metal-binding</keyword>
<keyword id="KW-0648">Protein biosynthesis</keyword>
<gene>
    <name evidence="1" type="primary">def</name>
    <name type="ordered locus">Cphamn1_0898</name>
</gene>
<name>DEF_CHLPB</name>
<feature type="chain" id="PRO_1000097299" description="Peptide deformylase">
    <location>
        <begin position="1"/>
        <end position="185"/>
    </location>
</feature>
<feature type="active site" evidence="1">
    <location>
        <position position="137"/>
    </location>
</feature>
<feature type="binding site" evidence="1">
    <location>
        <position position="94"/>
    </location>
    <ligand>
        <name>Fe cation</name>
        <dbReference type="ChEBI" id="CHEBI:24875"/>
    </ligand>
</feature>
<feature type="binding site" evidence="1">
    <location>
        <position position="136"/>
    </location>
    <ligand>
        <name>Fe cation</name>
        <dbReference type="ChEBI" id="CHEBI:24875"/>
    </ligand>
</feature>
<feature type="binding site" evidence="1">
    <location>
        <position position="140"/>
    </location>
    <ligand>
        <name>Fe cation</name>
        <dbReference type="ChEBI" id="CHEBI:24875"/>
    </ligand>
</feature>
<proteinExistence type="inferred from homology"/>
<evidence type="ECO:0000255" key="1">
    <source>
        <dbReference type="HAMAP-Rule" id="MF_00163"/>
    </source>
</evidence>
<comment type="function">
    <text evidence="1">Removes the formyl group from the N-terminal Met of newly synthesized proteins. Requires at least a dipeptide for an efficient rate of reaction. N-terminal L-methionine is a prerequisite for activity but the enzyme has broad specificity at other positions.</text>
</comment>
<comment type="catalytic activity">
    <reaction evidence="1">
        <text>N-terminal N-formyl-L-methionyl-[peptide] + H2O = N-terminal L-methionyl-[peptide] + formate</text>
        <dbReference type="Rhea" id="RHEA:24420"/>
        <dbReference type="Rhea" id="RHEA-COMP:10639"/>
        <dbReference type="Rhea" id="RHEA-COMP:10640"/>
        <dbReference type="ChEBI" id="CHEBI:15377"/>
        <dbReference type="ChEBI" id="CHEBI:15740"/>
        <dbReference type="ChEBI" id="CHEBI:49298"/>
        <dbReference type="ChEBI" id="CHEBI:64731"/>
        <dbReference type="EC" id="3.5.1.88"/>
    </reaction>
</comment>
<comment type="cofactor">
    <cofactor evidence="1">
        <name>Fe(2+)</name>
        <dbReference type="ChEBI" id="CHEBI:29033"/>
    </cofactor>
    <text evidence="1">Binds 1 Fe(2+) ion.</text>
</comment>
<comment type="similarity">
    <text evidence="1">Belongs to the polypeptide deformylase family.</text>
</comment>
<organism>
    <name type="scientific">Chlorobium phaeobacteroides (strain BS1)</name>
    <dbReference type="NCBI Taxonomy" id="331678"/>
    <lineage>
        <taxon>Bacteria</taxon>
        <taxon>Pseudomonadati</taxon>
        <taxon>Chlorobiota</taxon>
        <taxon>Chlorobiia</taxon>
        <taxon>Chlorobiales</taxon>
        <taxon>Chlorobiaceae</taxon>
        <taxon>Chlorobium/Pelodictyon group</taxon>
        <taxon>Chlorobium</taxon>
    </lineage>
</organism>
<protein>
    <recommendedName>
        <fullName evidence="1">Peptide deformylase</fullName>
        <shortName evidence="1">PDF</shortName>
        <ecNumber evidence="1">3.5.1.88</ecNumber>
    </recommendedName>
    <alternativeName>
        <fullName evidence="1">Polypeptide deformylase</fullName>
    </alternativeName>
</protein>
<sequence length="185" mass="20903">MILPINTYSDEVLRRKAKPLKESDAQLEELISNMLESMRNAEGIGLAAPQVGVSLRLIVVDLSLAEGYEAASPMVVINPHILSVKSFNSMEEGCLSIPDVRGDVVRPSAIQLKYRDRNFEECIGEFDRLAARVIQHEIDHLDGTLFVDRMQRRDRRKIQKELDALSRGEINTNYPVAFHEDSVVK</sequence>
<reference key="1">
    <citation type="submission" date="2008-06" db="EMBL/GenBank/DDBJ databases">
        <title>Complete sequence of Chlorobium phaeobacteroides BS1.</title>
        <authorList>
            <consortium name="US DOE Joint Genome Institute"/>
            <person name="Lucas S."/>
            <person name="Copeland A."/>
            <person name="Lapidus A."/>
            <person name="Glavina del Rio T."/>
            <person name="Dalin E."/>
            <person name="Tice H."/>
            <person name="Bruce D."/>
            <person name="Goodwin L."/>
            <person name="Pitluck S."/>
            <person name="Schmutz J."/>
            <person name="Larimer F."/>
            <person name="Land M."/>
            <person name="Hauser L."/>
            <person name="Kyrpides N."/>
            <person name="Ovchinnikova G."/>
            <person name="Li T."/>
            <person name="Liu Z."/>
            <person name="Zhao F."/>
            <person name="Overmann J."/>
            <person name="Bryant D.A."/>
            <person name="Richardson P."/>
        </authorList>
    </citation>
    <scope>NUCLEOTIDE SEQUENCE [LARGE SCALE GENOMIC DNA]</scope>
    <source>
        <strain>BS1</strain>
    </source>
</reference>
<accession>B3EPG5</accession>
<dbReference type="EC" id="3.5.1.88" evidence="1"/>
<dbReference type="EMBL" id="CP001101">
    <property type="protein sequence ID" value="ACE03843.1"/>
    <property type="molecule type" value="Genomic_DNA"/>
</dbReference>
<dbReference type="SMR" id="B3EPG5"/>
<dbReference type="STRING" id="331678.Cphamn1_0898"/>
<dbReference type="KEGG" id="cpb:Cphamn1_0898"/>
<dbReference type="eggNOG" id="COG0242">
    <property type="taxonomic scope" value="Bacteria"/>
</dbReference>
<dbReference type="HOGENOM" id="CLU_061901_2_1_10"/>
<dbReference type="OrthoDB" id="9784988at2"/>
<dbReference type="GO" id="GO:0046872">
    <property type="term" value="F:metal ion binding"/>
    <property type="evidence" value="ECO:0007669"/>
    <property type="project" value="UniProtKB-KW"/>
</dbReference>
<dbReference type="GO" id="GO:0042586">
    <property type="term" value="F:peptide deformylase activity"/>
    <property type="evidence" value="ECO:0007669"/>
    <property type="project" value="UniProtKB-UniRule"/>
</dbReference>
<dbReference type="GO" id="GO:0043686">
    <property type="term" value="P:co-translational protein modification"/>
    <property type="evidence" value="ECO:0007669"/>
    <property type="project" value="TreeGrafter"/>
</dbReference>
<dbReference type="GO" id="GO:0006412">
    <property type="term" value="P:translation"/>
    <property type="evidence" value="ECO:0007669"/>
    <property type="project" value="UniProtKB-UniRule"/>
</dbReference>
<dbReference type="CDD" id="cd00487">
    <property type="entry name" value="Pep_deformylase"/>
    <property type="match status" value="1"/>
</dbReference>
<dbReference type="Gene3D" id="3.90.45.10">
    <property type="entry name" value="Peptide deformylase"/>
    <property type="match status" value="1"/>
</dbReference>
<dbReference type="HAMAP" id="MF_00163">
    <property type="entry name" value="Pep_deformylase"/>
    <property type="match status" value="1"/>
</dbReference>
<dbReference type="InterPro" id="IPR023635">
    <property type="entry name" value="Peptide_deformylase"/>
</dbReference>
<dbReference type="InterPro" id="IPR036821">
    <property type="entry name" value="Peptide_deformylase_sf"/>
</dbReference>
<dbReference type="NCBIfam" id="TIGR00079">
    <property type="entry name" value="pept_deformyl"/>
    <property type="match status" value="1"/>
</dbReference>
<dbReference type="NCBIfam" id="NF001159">
    <property type="entry name" value="PRK00150.1-3"/>
    <property type="match status" value="1"/>
</dbReference>
<dbReference type="PANTHER" id="PTHR10458">
    <property type="entry name" value="PEPTIDE DEFORMYLASE"/>
    <property type="match status" value="1"/>
</dbReference>
<dbReference type="PANTHER" id="PTHR10458:SF22">
    <property type="entry name" value="PEPTIDE DEFORMYLASE"/>
    <property type="match status" value="1"/>
</dbReference>
<dbReference type="Pfam" id="PF01327">
    <property type="entry name" value="Pep_deformylase"/>
    <property type="match status" value="1"/>
</dbReference>
<dbReference type="PIRSF" id="PIRSF004749">
    <property type="entry name" value="Pep_def"/>
    <property type="match status" value="1"/>
</dbReference>
<dbReference type="PRINTS" id="PR01576">
    <property type="entry name" value="PDEFORMYLASE"/>
</dbReference>
<dbReference type="SUPFAM" id="SSF56420">
    <property type="entry name" value="Peptide deformylase"/>
    <property type="match status" value="1"/>
</dbReference>